<sequence length="364" mass="40526">MAQRWGPHALSGVQAQDAYEDSTQASLFTYTNSNNTRGPFEGPNYHIAPRWVYHLTSAWMTIVVIASIFTNGLVLVATMRFKKLRHPLNWILVNLAVADLAETVIASTISVVNQVYGYFVLGHPLCVVEGYTVSLCGITGLWSLAIISWERWLVVCKPFGNVRFDAKLAIVGIVFSWVWSAVWTAPPIFGWSRYWPYGLKTSCGPDVFSGTSYPGVQSYMMVLMVTCCITPLSIIVLCYLHVWLAIRAVAKQQKESESTQKAEKEVTRMVVVMVLAYCLCWGPYAFFACFATANPGYSFHPLVAALPAYFAKSATIYNPIIYVFMNRQFRNCILQLFGKKVEDSSELSSTSRTEASSVSSVSPA</sequence>
<comment type="function">
    <text>Visual pigments are the light-absorbing molecules that mediate vision. They consist of an apoprotein, opsin, covalently linked to cis-retinal. May increase spectral sensitivity in dim light.</text>
</comment>
<comment type="subunit">
    <text evidence="3">Monomer. Homodimer. Homotetramer.</text>
</comment>
<comment type="subcellular location">
    <subcellularLocation>
        <location>Membrane</location>
        <topology>Multi-pass membrane protein</topology>
    </subcellularLocation>
</comment>
<comment type="tissue specificity">
    <text>Expressed in cone photoreceptor cells.</text>
</comment>
<comment type="PTM">
    <text evidence="2">O-glycosylated.</text>
</comment>
<comment type="PTM">
    <text evidence="1">Phosphorylated on some or all of the serine and threonine residues present in the C-terminal region.</text>
</comment>
<comment type="similarity">
    <text evidence="6">Belongs to the G-protein coupled receptor 1 family. Opsin subfamily.</text>
</comment>
<reference key="1">
    <citation type="journal article" date="1999" name="Genetics">
        <title>The molecular genetics of red and green color vision in mammals.</title>
        <authorList>
            <person name="Yokoyama S."/>
            <person name="Radlwimmer F.B."/>
        </authorList>
    </citation>
    <scope>NUCLEOTIDE SEQUENCE [MRNA]</scope>
</reference>
<protein>
    <recommendedName>
        <fullName>Medium-wave-sensitive opsin 1</fullName>
    </recommendedName>
    <alternativeName>
        <fullName>Green cone photoreceptor pigment</fullName>
    </alternativeName>
    <alternativeName>
        <fullName>Green-sensitive opsin</fullName>
    </alternativeName>
    <alternativeName>
        <fullName>Medium wavelength-sensitive cone opsin</fullName>
    </alternativeName>
</protein>
<proteinExistence type="evidence at transcript level"/>
<feature type="chain" id="PRO_0000197784" description="Medium-wave-sensitive opsin 1">
    <location>
        <begin position="1"/>
        <end position="364"/>
    </location>
</feature>
<feature type="topological domain" description="Extracellular">
    <location>
        <begin position="1"/>
        <end position="52"/>
    </location>
</feature>
<feature type="transmembrane region" description="Helical; Name=1" evidence="4">
    <location>
        <begin position="53"/>
        <end position="77"/>
    </location>
</feature>
<feature type="topological domain" description="Cytoplasmic">
    <location>
        <begin position="78"/>
        <end position="89"/>
    </location>
</feature>
<feature type="transmembrane region" description="Helical; Name=2" evidence="4">
    <location>
        <begin position="90"/>
        <end position="115"/>
    </location>
</feature>
<feature type="topological domain" description="Extracellular">
    <location>
        <begin position="116"/>
        <end position="129"/>
    </location>
</feature>
<feature type="transmembrane region" description="Helical; Name=3" evidence="4">
    <location>
        <begin position="130"/>
        <end position="149"/>
    </location>
</feature>
<feature type="topological domain" description="Cytoplasmic">
    <location>
        <begin position="150"/>
        <end position="168"/>
    </location>
</feature>
<feature type="transmembrane region" description="Helical; Name=4" evidence="4">
    <location>
        <begin position="169"/>
        <end position="192"/>
    </location>
</feature>
<feature type="topological domain" description="Extracellular">
    <location>
        <begin position="193"/>
        <end position="218"/>
    </location>
</feature>
<feature type="transmembrane region" description="Helical; Name=5" evidence="4">
    <location>
        <begin position="219"/>
        <end position="246"/>
    </location>
</feature>
<feature type="topological domain" description="Cytoplasmic">
    <location>
        <begin position="247"/>
        <end position="268"/>
    </location>
</feature>
<feature type="transmembrane region" description="Helical; Name=6" evidence="4">
    <location>
        <begin position="269"/>
        <end position="292"/>
    </location>
</feature>
<feature type="topological domain" description="Extracellular">
    <location>
        <begin position="293"/>
        <end position="300"/>
    </location>
</feature>
<feature type="transmembrane region" description="Helical; Name=7" evidence="4">
    <location>
        <begin position="301"/>
        <end position="325"/>
    </location>
</feature>
<feature type="topological domain" description="Cytoplasmic">
    <location>
        <begin position="326"/>
        <end position="364"/>
    </location>
</feature>
<feature type="region of interest" description="Required for 11-cis-retinal regeneration" evidence="3">
    <location>
        <begin position="17"/>
        <end position="43"/>
    </location>
</feature>
<feature type="modified residue" description="N6-(retinylidene)lysine" evidence="1">
    <location>
        <position position="312"/>
    </location>
</feature>
<feature type="glycosylation site" description="N-linked (GlcNAc...) asparagine" evidence="5">
    <location>
        <position position="34"/>
    </location>
</feature>
<feature type="disulfide bond" evidence="6">
    <location>
        <begin position="126"/>
        <end position="203"/>
    </location>
</feature>
<accession>Q9R024</accession>
<gene>
    <name type="primary">OPN1MW</name>
    <name type="synonym">GCP</name>
</gene>
<dbReference type="EMBL" id="AF132042">
    <property type="protein sequence ID" value="AAD30523.1"/>
    <property type="molecule type" value="mRNA"/>
</dbReference>
<dbReference type="RefSeq" id="NP_001166460.1">
    <property type="nucleotide sequence ID" value="NM_001172989.1"/>
</dbReference>
<dbReference type="SMR" id="Q9R024"/>
<dbReference type="FunCoup" id="Q9R024">
    <property type="interactions" value="305"/>
</dbReference>
<dbReference type="STRING" id="10141.ENSCPOP00000010067"/>
<dbReference type="GlyCosmos" id="Q9R024">
    <property type="glycosylation" value="1 site, No reported glycans"/>
</dbReference>
<dbReference type="GeneID" id="100135586"/>
<dbReference type="KEGG" id="cpoc:100135586"/>
<dbReference type="CTD" id="2652"/>
<dbReference type="eggNOG" id="KOG3656">
    <property type="taxonomic scope" value="Eukaryota"/>
</dbReference>
<dbReference type="HOGENOM" id="CLU_009579_3_0_1"/>
<dbReference type="InParanoid" id="Q9R024"/>
<dbReference type="OrthoDB" id="8545112at2759"/>
<dbReference type="TreeFam" id="TF324998"/>
<dbReference type="Proteomes" id="UP000005447">
    <property type="component" value="Unassembled WGS sequence"/>
</dbReference>
<dbReference type="GO" id="GO:0005886">
    <property type="term" value="C:plasma membrane"/>
    <property type="evidence" value="ECO:0000250"/>
    <property type="project" value="UniProtKB"/>
</dbReference>
<dbReference type="GO" id="GO:0004930">
    <property type="term" value="F:G protein-coupled receptor activity"/>
    <property type="evidence" value="ECO:0007669"/>
    <property type="project" value="UniProtKB-KW"/>
</dbReference>
<dbReference type="GO" id="GO:0042802">
    <property type="term" value="F:identical protein binding"/>
    <property type="evidence" value="ECO:0000250"/>
    <property type="project" value="UniProtKB"/>
</dbReference>
<dbReference type="GO" id="GO:0009881">
    <property type="term" value="F:photoreceptor activity"/>
    <property type="evidence" value="ECO:0007669"/>
    <property type="project" value="UniProtKB-KW"/>
</dbReference>
<dbReference type="GO" id="GO:0007602">
    <property type="term" value="P:phototransduction"/>
    <property type="evidence" value="ECO:0007669"/>
    <property type="project" value="UniProtKB-KW"/>
</dbReference>
<dbReference type="GO" id="GO:0007601">
    <property type="term" value="P:visual perception"/>
    <property type="evidence" value="ECO:0007669"/>
    <property type="project" value="UniProtKB-KW"/>
</dbReference>
<dbReference type="FunFam" id="1.20.1070.10:FF:000090">
    <property type="entry name" value="Long-wave-sensitive opsin 1"/>
    <property type="match status" value="1"/>
</dbReference>
<dbReference type="Gene3D" id="1.20.1070.10">
    <property type="entry name" value="Rhodopsin 7-helix transmembrane proteins"/>
    <property type="match status" value="1"/>
</dbReference>
<dbReference type="InterPro" id="IPR050125">
    <property type="entry name" value="GPCR_opsins"/>
</dbReference>
<dbReference type="InterPro" id="IPR000276">
    <property type="entry name" value="GPCR_Rhodpsn"/>
</dbReference>
<dbReference type="InterPro" id="IPR017452">
    <property type="entry name" value="GPCR_Rhodpsn_7TM"/>
</dbReference>
<dbReference type="InterPro" id="IPR001760">
    <property type="entry name" value="Opsin"/>
</dbReference>
<dbReference type="InterPro" id="IPR000378">
    <property type="entry name" value="Opsin_red/grn"/>
</dbReference>
<dbReference type="InterPro" id="IPR027430">
    <property type="entry name" value="Retinal_BS"/>
</dbReference>
<dbReference type="PANTHER" id="PTHR24240">
    <property type="entry name" value="OPSIN"/>
    <property type="match status" value="1"/>
</dbReference>
<dbReference type="Pfam" id="PF00001">
    <property type="entry name" value="7tm_1"/>
    <property type="match status" value="1"/>
</dbReference>
<dbReference type="PRINTS" id="PR00237">
    <property type="entry name" value="GPCRRHODOPSN"/>
</dbReference>
<dbReference type="PRINTS" id="PR00238">
    <property type="entry name" value="OPSIN"/>
</dbReference>
<dbReference type="PRINTS" id="PR00575">
    <property type="entry name" value="OPSINREDGRN"/>
</dbReference>
<dbReference type="SMART" id="SM01381">
    <property type="entry name" value="7TM_GPCR_Srsx"/>
    <property type="match status" value="1"/>
</dbReference>
<dbReference type="SUPFAM" id="SSF81321">
    <property type="entry name" value="Family A G protein-coupled receptor-like"/>
    <property type="match status" value="1"/>
</dbReference>
<dbReference type="PROSITE" id="PS00237">
    <property type="entry name" value="G_PROTEIN_RECEP_F1_1"/>
    <property type="match status" value="1"/>
</dbReference>
<dbReference type="PROSITE" id="PS50262">
    <property type="entry name" value="G_PROTEIN_RECEP_F1_2"/>
    <property type="match status" value="1"/>
</dbReference>
<dbReference type="PROSITE" id="PS00238">
    <property type="entry name" value="OPSIN"/>
    <property type="match status" value="1"/>
</dbReference>
<organism>
    <name type="scientific">Cavia porcellus</name>
    <name type="common">Guinea pig</name>
    <dbReference type="NCBI Taxonomy" id="10141"/>
    <lineage>
        <taxon>Eukaryota</taxon>
        <taxon>Metazoa</taxon>
        <taxon>Chordata</taxon>
        <taxon>Craniata</taxon>
        <taxon>Vertebrata</taxon>
        <taxon>Euteleostomi</taxon>
        <taxon>Mammalia</taxon>
        <taxon>Eutheria</taxon>
        <taxon>Euarchontoglires</taxon>
        <taxon>Glires</taxon>
        <taxon>Rodentia</taxon>
        <taxon>Hystricomorpha</taxon>
        <taxon>Caviidae</taxon>
        <taxon>Cavia</taxon>
    </lineage>
</organism>
<name>OPSG_CAVPO</name>
<keyword id="KW-0157">Chromophore</keyword>
<keyword id="KW-1015">Disulfide bond</keyword>
<keyword id="KW-0297">G-protein coupled receptor</keyword>
<keyword id="KW-0325">Glycoprotein</keyword>
<keyword id="KW-0472">Membrane</keyword>
<keyword id="KW-0597">Phosphoprotein</keyword>
<keyword id="KW-0600">Photoreceptor protein</keyword>
<keyword id="KW-0675">Receptor</keyword>
<keyword id="KW-1185">Reference proteome</keyword>
<keyword id="KW-0681">Retinal protein</keyword>
<keyword id="KW-0716">Sensory transduction</keyword>
<keyword id="KW-0807">Transducer</keyword>
<keyword id="KW-0812">Transmembrane</keyword>
<keyword id="KW-1133">Transmembrane helix</keyword>
<keyword id="KW-0844">Vision</keyword>
<evidence type="ECO:0000250" key="1"/>
<evidence type="ECO:0000250" key="2">
    <source>
        <dbReference type="UniProtKB" id="O35599"/>
    </source>
</evidence>
<evidence type="ECO:0000250" key="3">
    <source>
        <dbReference type="UniProtKB" id="P04001"/>
    </source>
</evidence>
<evidence type="ECO:0000255" key="4"/>
<evidence type="ECO:0000255" key="5">
    <source>
        <dbReference type="PROSITE-ProRule" id="PRU00498"/>
    </source>
</evidence>
<evidence type="ECO:0000255" key="6">
    <source>
        <dbReference type="PROSITE-ProRule" id="PRU00521"/>
    </source>
</evidence>